<evidence type="ECO:0000250" key="1"/>
<evidence type="ECO:0000250" key="2">
    <source>
        <dbReference type="UniProtKB" id="O95551"/>
    </source>
</evidence>
<evidence type="ECO:0000250" key="3">
    <source>
        <dbReference type="UniProtKB" id="P31384"/>
    </source>
</evidence>
<evidence type="ECO:0000256" key="4">
    <source>
        <dbReference type="SAM" id="MobiDB-lite"/>
    </source>
</evidence>
<evidence type="ECO:0000305" key="5"/>
<feature type="chain" id="PRO_0000290605" description="CCR4-Not complex 3'-5'-exoribonuclease subunit Ccr4">
    <location>
        <begin position="1"/>
        <end position="746"/>
    </location>
</feature>
<feature type="repeat" description="LRR 1">
    <location>
        <begin position="249"/>
        <end position="270"/>
    </location>
</feature>
<feature type="repeat" description="LRR 2">
    <location>
        <begin position="272"/>
        <end position="293"/>
    </location>
</feature>
<feature type="repeat" description="LRR 3">
    <location>
        <begin position="295"/>
        <end position="316"/>
    </location>
</feature>
<feature type="repeat" description="LRR 4">
    <location>
        <begin position="318"/>
        <end position="339"/>
    </location>
</feature>
<feature type="region of interest" description="Disordered" evidence="4">
    <location>
        <begin position="24"/>
        <end position="61"/>
    </location>
</feature>
<feature type="region of interest" description="Disordered" evidence="4">
    <location>
        <begin position="96"/>
        <end position="124"/>
    </location>
</feature>
<feature type="compositionally biased region" description="Basic residues" evidence="4">
    <location>
        <begin position="102"/>
        <end position="118"/>
    </location>
</feature>
<feature type="binding site" evidence="2">
    <location>
        <position position="429"/>
    </location>
    <ligand>
        <name>Mg(2+)</name>
        <dbReference type="ChEBI" id="CHEBI:18420"/>
    </ligand>
</feature>
<organism>
    <name type="scientific">Aspergillus oryzae (strain ATCC 42149 / RIB 40)</name>
    <name type="common">Yellow koji mold</name>
    <dbReference type="NCBI Taxonomy" id="510516"/>
    <lineage>
        <taxon>Eukaryota</taxon>
        <taxon>Fungi</taxon>
        <taxon>Dikarya</taxon>
        <taxon>Ascomycota</taxon>
        <taxon>Pezizomycotina</taxon>
        <taxon>Eurotiomycetes</taxon>
        <taxon>Eurotiomycetidae</taxon>
        <taxon>Eurotiales</taxon>
        <taxon>Aspergillaceae</taxon>
        <taxon>Aspergillus</taxon>
        <taxon>Aspergillus subgen. Circumdati</taxon>
    </lineage>
</organism>
<protein>
    <recommendedName>
        <fullName evidence="5">CCR4-Not complex 3'-5'-exoribonuclease subunit Ccr4</fullName>
        <ecNumber>3.1.13.4</ecNumber>
    </recommendedName>
    <alternativeName>
        <fullName>Carbon catabolite repressor protein 4</fullName>
    </alternativeName>
    <alternativeName>
        <fullName>Cytoplasmic deadenylase</fullName>
    </alternativeName>
    <alternativeName>
        <fullName>Glucose-repressible alcohol dehydrogenase transcriptional effector</fullName>
    </alternativeName>
</protein>
<reference key="1">
    <citation type="journal article" date="2005" name="Nature">
        <title>Genome sequencing and analysis of Aspergillus oryzae.</title>
        <authorList>
            <person name="Machida M."/>
            <person name="Asai K."/>
            <person name="Sano M."/>
            <person name="Tanaka T."/>
            <person name="Kumagai T."/>
            <person name="Terai G."/>
            <person name="Kusumoto K."/>
            <person name="Arima T."/>
            <person name="Akita O."/>
            <person name="Kashiwagi Y."/>
            <person name="Abe K."/>
            <person name="Gomi K."/>
            <person name="Horiuchi H."/>
            <person name="Kitamoto K."/>
            <person name="Kobayashi T."/>
            <person name="Takeuchi M."/>
            <person name="Denning D.W."/>
            <person name="Galagan J.E."/>
            <person name="Nierman W.C."/>
            <person name="Yu J."/>
            <person name="Archer D.B."/>
            <person name="Bennett J.W."/>
            <person name="Bhatnagar D."/>
            <person name="Cleveland T.E."/>
            <person name="Fedorova N.D."/>
            <person name="Gotoh O."/>
            <person name="Horikawa H."/>
            <person name="Hosoyama A."/>
            <person name="Ichinomiya M."/>
            <person name="Igarashi R."/>
            <person name="Iwashita K."/>
            <person name="Juvvadi P.R."/>
            <person name="Kato M."/>
            <person name="Kato Y."/>
            <person name="Kin T."/>
            <person name="Kokubun A."/>
            <person name="Maeda H."/>
            <person name="Maeyama N."/>
            <person name="Maruyama J."/>
            <person name="Nagasaki H."/>
            <person name="Nakajima T."/>
            <person name="Oda K."/>
            <person name="Okada K."/>
            <person name="Paulsen I."/>
            <person name="Sakamoto K."/>
            <person name="Sawano T."/>
            <person name="Takahashi M."/>
            <person name="Takase K."/>
            <person name="Terabayashi Y."/>
            <person name="Wortman J.R."/>
            <person name="Yamada O."/>
            <person name="Yamagata Y."/>
            <person name="Anazawa H."/>
            <person name="Hata Y."/>
            <person name="Koide Y."/>
            <person name="Komori T."/>
            <person name="Koyama Y."/>
            <person name="Minetoki T."/>
            <person name="Suharnan S."/>
            <person name="Tanaka A."/>
            <person name="Isono K."/>
            <person name="Kuhara S."/>
            <person name="Ogasawara N."/>
            <person name="Kikuchi H."/>
        </authorList>
    </citation>
    <scope>NUCLEOTIDE SEQUENCE [LARGE SCALE GENOMIC DNA]</scope>
    <source>
        <strain>ATCC 42149 / RIB 40</strain>
    </source>
</reference>
<comment type="function">
    <text evidence="3">Acts as a catalytic component of the CCR4-NOT core complex, which in the nucleus seems to be a general transcription factor, and in the cytoplasm the major mRNA deadenylase involved in mRNA turnover (By similarity). Ccr4 has 3'-5' RNase activity with a strong preference for polyadenylated substrates and also low exonuclease activity towards single-stranded DNA (By similarity).</text>
</comment>
<comment type="catalytic activity">
    <reaction>
        <text>Exonucleolytic cleavage of poly(A) to 5'-AMP.</text>
        <dbReference type="EC" id="3.1.13.4"/>
    </reaction>
</comment>
<comment type="cofactor">
    <cofactor evidence="1">
        <name>Mg(2+)</name>
        <dbReference type="ChEBI" id="CHEBI:18420"/>
    </cofactor>
</comment>
<comment type="subcellular location">
    <subcellularLocation>
        <location evidence="1">Cytoplasm</location>
    </subcellularLocation>
    <subcellularLocation>
        <location evidence="1">Nucleus</location>
    </subcellularLocation>
</comment>
<comment type="similarity">
    <text evidence="5">Belongs to the CCR4/nocturin family.</text>
</comment>
<keyword id="KW-0963">Cytoplasm</keyword>
<keyword id="KW-0269">Exonuclease</keyword>
<keyword id="KW-0378">Hydrolase</keyword>
<keyword id="KW-0433">Leucine-rich repeat</keyword>
<keyword id="KW-0460">Magnesium</keyword>
<keyword id="KW-0479">Metal-binding</keyword>
<keyword id="KW-0540">Nuclease</keyword>
<keyword id="KW-0539">Nucleus</keyword>
<keyword id="KW-1185">Reference proteome</keyword>
<keyword id="KW-0677">Repeat</keyword>
<keyword id="KW-0694">RNA-binding</keyword>
<keyword id="KW-0804">Transcription</keyword>
<keyword id="KW-0805">Transcription regulation</keyword>
<name>CCR4_ASPOR</name>
<proteinExistence type="inferred from homology"/>
<sequence length="746" mass="84117">MADGTYRFQQPGAGQFFFQTQQQQPSHQRHLVRNGTNSPTGRLKFSHDTPSPSRSPPLGQAAALNPFTMYSQTHQGQHVLMNGGQAHQRFGMQMPKFQSQSHHPHPAQQAHHHTHHNQASHNINHQHNFSSGALAAATPHFTPSHMQNGAHANVDEDIDESMNEHWQQQLQLAAESRQASSPHYYARAVAQQTKGIQIAPSQPEPQENGGDVKNGLTKVKASPRQGWYALDFGGQGLRALSTSLFSYDFLKELYLNHNKLKALPQTIGQLRKLEHLDLSGNDLTELPEEIGMLTSLKKLYLFDNNIRTLPYEMGYLYRLDTLGIEGNPLNDILKSQIMKEGTRALIKYLREEMPENPPPPDRDWVILDETAGTSTEKITVLSYNALCDSSATQSHFGYTPSRALSWEFRRDVILSELRSHDSDIVCLQEVDQGSYNGYFREQLAYNGYKGVYWPRGRAMGMQEEEAKSVDGCATFFKGTKFILLDKQMINFGQTAVRRPDAKGQDDIYNRLWQKDHIAVVVFLENRLTGSRFIVVNAHLYWDPAFKDVKLIQTAILMEEITKLSETYAKWPACTDKTAFRFSEAEGGEAQTPPEPAPSMEYSSGDQIPLFMCGDFNSSPGSAAYNLIANGRLTEEHPDLEKRLYGNLSRVGMTHPFKLKSAYNSIGELSFTNYTPDFKDILDYIWFTSNTLHVSALLGEVDKDYLQKVPGFPNFHFPSDHIALFAEFVVKGKKGKVVEADFGPQRN</sequence>
<accession>Q2UUI3</accession>
<dbReference type="EC" id="3.1.13.4"/>
<dbReference type="EMBL" id="BA000049">
    <property type="protein sequence ID" value="BAE54782.1"/>
    <property type="molecule type" value="Genomic_DNA"/>
</dbReference>
<dbReference type="RefSeq" id="XP_001816784.1">
    <property type="nucleotide sequence ID" value="XM_001816732.2"/>
</dbReference>
<dbReference type="SMR" id="Q2UUI3"/>
<dbReference type="STRING" id="510516.Q2UUI3"/>
<dbReference type="EnsemblFungi" id="BAE54782">
    <property type="protein sequence ID" value="BAE54782"/>
    <property type="gene ID" value="AO090009000303"/>
</dbReference>
<dbReference type="GeneID" id="5988714"/>
<dbReference type="KEGG" id="aor:AO090009000303"/>
<dbReference type="VEuPathDB" id="FungiDB:AO090009000303"/>
<dbReference type="HOGENOM" id="CLU_016428_4_0_1"/>
<dbReference type="OMA" id="PHYYARA"/>
<dbReference type="OrthoDB" id="57157at5052"/>
<dbReference type="Proteomes" id="UP000006564">
    <property type="component" value="Chromosome 1"/>
</dbReference>
<dbReference type="GO" id="GO:0030015">
    <property type="term" value="C:CCR4-NOT core complex"/>
    <property type="evidence" value="ECO:0007669"/>
    <property type="project" value="EnsemblFungi"/>
</dbReference>
<dbReference type="GO" id="GO:0016593">
    <property type="term" value="C:Cdc73/Paf1 complex"/>
    <property type="evidence" value="ECO:0007669"/>
    <property type="project" value="EnsemblFungi"/>
</dbReference>
<dbReference type="GO" id="GO:0000932">
    <property type="term" value="C:P-body"/>
    <property type="evidence" value="ECO:0007669"/>
    <property type="project" value="EnsemblFungi"/>
</dbReference>
<dbReference type="GO" id="GO:0046872">
    <property type="term" value="F:metal ion binding"/>
    <property type="evidence" value="ECO:0007669"/>
    <property type="project" value="UniProtKB-KW"/>
</dbReference>
<dbReference type="GO" id="GO:0004535">
    <property type="term" value="F:poly(A)-specific ribonuclease activity"/>
    <property type="evidence" value="ECO:0007669"/>
    <property type="project" value="UniProtKB-EC"/>
</dbReference>
<dbReference type="GO" id="GO:0003723">
    <property type="term" value="F:RNA binding"/>
    <property type="evidence" value="ECO:0007669"/>
    <property type="project" value="UniProtKB-KW"/>
</dbReference>
<dbReference type="GO" id="GO:0006260">
    <property type="term" value="P:DNA replication"/>
    <property type="evidence" value="ECO:0007669"/>
    <property type="project" value="EnsemblFungi"/>
</dbReference>
<dbReference type="GO" id="GO:0000076">
    <property type="term" value="P:DNA replication checkpoint signaling"/>
    <property type="evidence" value="ECO:0007669"/>
    <property type="project" value="EnsemblFungi"/>
</dbReference>
<dbReference type="GO" id="GO:0000289">
    <property type="term" value="P:nuclear-transcribed mRNA poly(A) tail shortening"/>
    <property type="evidence" value="ECO:0007669"/>
    <property type="project" value="EnsemblFungi"/>
</dbReference>
<dbReference type="GO" id="GO:0032968">
    <property type="term" value="P:positive regulation of transcription elongation by RNA polymerase II"/>
    <property type="evidence" value="ECO:0007669"/>
    <property type="project" value="EnsemblFungi"/>
</dbReference>
<dbReference type="GO" id="GO:0006368">
    <property type="term" value="P:transcription elongation by RNA polymerase II"/>
    <property type="evidence" value="ECO:0007669"/>
    <property type="project" value="EnsemblFungi"/>
</dbReference>
<dbReference type="GO" id="GO:0007089">
    <property type="term" value="P:traversing start control point of mitotic cell cycle"/>
    <property type="evidence" value="ECO:0007669"/>
    <property type="project" value="EnsemblFungi"/>
</dbReference>
<dbReference type="CDD" id="cd09097">
    <property type="entry name" value="Deadenylase_CCR4"/>
    <property type="match status" value="1"/>
</dbReference>
<dbReference type="FunFam" id="3.60.10.10:FF:000037">
    <property type="entry name" value="Glucose-repressible alcohol dehydrogenase transcriptional effector"/>
    <property type="match status" value="1"/>
</dbReference>
<dbReference type="FunFam" id="3.80.10.10:FF:000447">
    <property type="entry name" value="Glucose-repressible alcohol dehydrogenase transcriptional effector"/>
    <property type="match status" value="1"/>
</dbReference>
<dbReference type="Gene3D" id="3.60.10.10">
    <property type="entry name" value="Endonuclease/exonuclease/phosphatase"/>
    <property type="match status" value="1"/>
</dbReference>
<dbReference type="Gene3D" id="3.80.10.10">
    <property type="entry name" value="Ribonuclease Inhibitor"/>
    <property type="match status" value="1"/>
</dbReference>
<dbReference type="InterPro" id="IPR050410">
    <property type="entry name" value="CCR4/nocturin_mRNA_transcr"/>
</dbReference>
<dbReference type="InterPro" id="IPR036691">
    <property type="entry name" value="Endo/exonu/phosph_ase_sf"/>
</dbReference>
<dbReference type="InterPro" id="IPR005135">
    <property type="entry name" value="Endo/exonuclease/phosphatase"/>
</dbReference>
<dbReference type="InterPro" id="IPR001611">
    <property type="entry name" value="Leu-rich_rpt"/>
</dbReference>
<dbReference type="InterPro" id="IPR003591">
    <property type="entry name" value="Leu-rich_rpt_typical-subtyp"/>
</dbReference>
<dbReference type="InterPro" id="IPR032675">
    <property type="entry name" value="LRR_dom_sf"/>
</dbReference>
<dbReference type="InterPro" id="IPR055414">
    <property type="entry name" value="LRR_R13L4/SHOC2-like"/>
</dbReference>
<dbReference type="PANTHER" id="PTHR12121">
    <property type="entry name" value="CARBON CATABOLITE REPRESSOR PROTEIN 4"/>
    <property type="match status" value="1"/>
</dbReference>
<dbReference type="PANTHER" id="PTHR12121:SF100">
    <property type="entry name" value="POLY(A)-SPECIFIC RIBONUCLEASE"/>
    <property type="match status" value="1"/>
</dbReference>
<dbReference type="Pfam" id="PF03372">
    <property type="entry name" value="Exo_endo_phos"/>
    <property type="match status" value="1"/>
</dbReference>
<dbReference type="Pfam" id="PF23598">
    <property type="entry name" value="LRR_14"/>
    <property type="match status" value="1"/>
</dbReference>
<dbReference type="SMART" id="SM00369">
    <property type="entry name" value="LRR_TYP"/>
    <property type="match status" value="3"/>
</dbReference>
<dbReference type="SUPFAM" id="SSF56219">
    <property type="entry name" value="DNase I-like"/>
    <property type="match status" value="1"/>
</dbReference>
<dbReference type="SUPFAM" id="SSF52058">
    <property type="entry name" value="L domain-like"/>
    <property type="match status" value="1"/>
</dbReference>
<dbReference type="PROSITE" id="PS51450">
    <property type="entry name" value="LRR"/>
    <property type="match status" value="4"/>
</dbReference>
<gene>
    <name type="primary">ccr4</name>
    <name type="ORF">AO090009000303</name>
</gene>